<dbReference type="EC" id="5.4.99.27" evidence="1"/>
<dbReference type="EMBL" id="CT573326">
    <property type="protein sequence ID" value="CAK16882.1"/>
    <property type="molecule type" value="Genomic_DNA"/>
</dbReference>
<dbReference type="RefSeq" id="WP_011535253.1">
    <property type="nucleotide sequence ID" value="NC_008027.1"/>
</dbReference>
<dbReference type="SMR" id="Q1I653"/>
<dbReference type="STRING" id="384676.PSEEN4193"/>
<dbReference type="GeneID" id="32807200"/>
<dbReference type="KEGG" id="pen:PSEEN4193"/>
<dbReference type="eggNOG" id="COG0585">
    <property type="taxonomic scope" value="Bacteria"/>
</dbReference>
<dbReference type="HOGENOM" id="CLU_005281_4_0_6"/>
<dbReference type="OrthoDB" id="1550679at2"/>
<dbReference type="Proteomes" id="UP000000658">
    <property type="component" value="Chromosome"/>
</dbReference>
<dbReference type="GO" id="GO:0005829">
    <property type="term" value="C:cytosol"/>
    <property type="evidence" value="ECO:0007669"/>
    <property type="project" value="TreeGrafter"/>
</dbReference>
<dbReference type="GO" id="GO:0003723">
    <property type="term" value="F:RNA binding"/>
    <property type="evidence" value="ECO:0007669"/>
    <property type="project" value="InterPro"/>
</dbReference>
<dbReference type="GO" id="GO:0160150">
    <property type="term" value="F:tRNA pseudouridine(13) synthase activity"/>
    <property type="evidence" value="ECO:0007669"/>
    <property type="project" value="UniProtKB-EC"/>
</dbReference>
<dbReference type="GO" id="GO:0031119">
    <property type="term" value="P:tRNA pseudouridine synthesis"/>
    <property type="evidence" value="ECO:0007669"/>
    <property type="project" value="UniProtKB-UniRule"/>
</dbReference>
<dbReference type="CDD" id="cd02575">
    <property type="entry name" value="PseudoU_synth_EcTruD"/>
    <property type="match status" value="1"/>
</dbReference>
<dbReference type="Gene3D" id="3.30.2350.20">
    <property type="entry name" value="TruD, catalytic domain"/>
    <property type="match status" value="1"/>
</dbReference>
<dbReference type="Gene3D" id="3.30.2340.10">
    <property type="entry name" value="TruD, insertion domain"/>
    <property type="match status" value="1"/>
</dbReference>
<dbReference type="HAMAP" id="MF_01082">
    <property type="entry name" value="TruD"/>
    <property type="match status" value="1"/>
</dbReference>
<dbReference type="InterPro" id="IPR020103">
    <property type="entry name" value="PsdUridine_synth_cat_dom_sf"/>
</dbReference>
<dbReference type="InterPro" id="IPR001656">
    <property type="entry name" value="PsdUridine_synth_TruD"/>
</dbReference>
<dbReference type="InterPro" id="IPR020119">
    <property type="entry name" value="PsdUridine_synth_TruD_CS"/>
</dbReference>
<dbReference type="InterPro" id="IPR011760">
    <property type="entry name" value="PsdUridine_synth_TruD_insert"/>
</dbReference>
<dbReference type="InterPro" id="IPR042214">
    <property type="entry name" value="TruD_catalytic"/>
</dbReference>
<dbReference type="InterPro" id="IPR043165">
    <property type="entry name" value="TruD_insert_sf"/>
</dbReference>
<dbReference type="InterPro" id="IPR050170">
    <property type="entry name" value="TruD_pseudoU_synthase"/>
</dbReference>
<dbReference type="NCBIfam" id="NF002153">
    <property type="entry name" value="PRK00984.1-2"/>
    <property type="match status" value="1"/>
</dbReference>
<dbReference type="PANTHER" id="PTHR47811">
    <property type="entry name" value="TRNA PSEUDOURIDINE SYNTHASE D"/>
    <property type="match status" value="1"/>
</dbReference>
<dbReference type="PANTHER" id="PTHR47811:SF1">
    <property type="entry name" value="TRNA PSEUDOURIDINE SYNTHASE D"/>
    <property type="match status" value="1"/>
</dbReference>
<dbReference type="Pfam" id="PF01142">
    <property type="entry name" value="TruD"/>
    <property type="match status" value="2"/>
</dbReference>
<dbReference type="SUPFAM" id="SSF55120">
    <property type="entry name" value="Pseudouridine synthase"/>
    <property type="match status" value="1"/>
</dbReference>
<dbReference type="PROSITE" id="PS50984">
    <property type="entry name" value="TRUD"/>
    <property type="match status" value="1"/>
</dbReference>
<dbReference type="PROSITE" id="PS01268">
    <property type="entry name" value="UPF0024"/>
    <property type="match status" value="1"/>
</dbReference>
<organism>
    <name type="scientific">Pseudomonas entomophila (strain L48)</name>
    <dbReference type="NCBI Taxonomy" id="384676"/>
    <lineage>
        <taxon>Bacteria</taxon>
        <taxon>Pseudomonadati</taxon>
        <taxon>Pseudomonadota</taxon>
        <taxon>Gammaproteobacteria</taxon>
        <taxon>Pseudomonadales</taxon>
        <taxon>Pseudomonadaceae</taxon>
        <taxon>Pseudomonas</taxon>
    </lineage>
</organism>
<accession>Q1I653</accession>
<gene>
    <name evidence="1" type="primary">truD</name>
    <name type="ordered locus">PSEEN4193</name>
</gene>
<proteinExistence type="inferred from homology"/>
<protein>
    <recommendedName>
        <fullName evidence="1">tRNA pseudouridine synthase D</fullName>
        <ecNumber evidence="1">5.4.99.27</ecNumber>
    </recommendedName>
    <alternativeName>
        <fullName evidence="1">tRNA pseudouridine(13) synthase</fullName>
    </alternativeName>
    <alternativeName>
        <fullName evidence="1">tRNA pseudouridylate synthase D</fullName>
    </alternativeName>
    <alternativeName>
        <fullName evidence="1">tRNA-uridine isomerase D</fullName>
    </alternativeName>
</protein>
<sequence>MTELELLGPRASGDALGTAVLKAVAEDFQVDEVLDIPLSGQGEHLWLWVEKRDLNTEEAARRLARAAGVPARSISYAGLKDRQALTRQWFSLHLPGKADPDLSRAEDETLRVLKQVRHQRKLQRGAHSANGFTLRLTGLQADHPALDARLEQLKQQGVPNYFGAQRFGHAGGNVHDALDWATRQALPEQRNVRSRLLSAARSYLFNQVLAARVADGSWQHAQVGDLLAFTDSRSFFAAGEAECSDPRLAILDLHPTGPLWGEGPAPGGGTPQALETEVGARHPQLCQWLARAGMDHERRILRLPIGRLTWHYPEPDILQLEFVLPAGCFATVVVRELVDLVPAGQTDSPCVF</sequence>
<comment type="function">
    <text evidence="1">Responsible for synthesis of pseudouridine from uracil-13 in transfer RNAs.</text>
</comment>
<comment type="catalytic activity">
    <reaction evidence="1">
        <text>uridine(13) in tRNA = pseudouridine(13) in tRNA</text>
        <dbReference type="Rhea" id="RHEA:42540"/>
        <dbReference type="Rhea" id="RHEA-COMP:10105"/>
        <dbReference type="Rhea" id="RHEA-COMP:10106"/>
        <dbReference type="ChEBI" id="CHEBI:65314"/>
        <dbReference type="ChEBI" id="CHEBI:65315"/>
        <dbReference type="EC" id="5.4.99.27"/>
    </reaction>
</comment>
<comment type="similarity">
    <text evidence="1">Belongs to the pseudouridine synthase TruD family.</text>
</comment>
<reference key="1">
    <citation type="journal article" date="2006" name="Nat. Biotechnol.">
        <title>Complete genome sequence of the entomopathogenic and metabolically versatile soil bacterium Pseudomonas entomophila.</title>
        <authorList>
            <person name="Vodovar N."/>
            <person name="Vallenet D."/>
            <person name="Cruveiller S."/>
            <person name="Rouy Z."/>
            <person name="Barbe V."/>
            <person name="Acosta C."/>
            <person name="Cattolico L."/>
            <person name="Jubin C."/>
            <person name="Lajus A."/>
            <person name="Segurens B."/>
            <person name="Vacherie B."/>
            <person name="Wincker P."/>
            <person name="Weissenbach J."/>
            <person name="Lemaitre B."/>
            <person name="Medigue C."/>
            <person name="Boccard F."/>
        </authorList>
    </citation>
    <scope>NUCLEOTIDE SEQUENCE [LARGE SCALE GENOMIC DNA]</scope>
    <source>
        <strain>L48</strain>
    </source>
</reference>
<keyword id="KW-0413">Isomerase</keyword>
<keyword id="KW-0819">tRNA processing</keyword>
<feature type="chain" id="PRO_1000084756" description="tRNA pseudouridine synthase D">
    <location>
        <begin position="1"/>
        <end position="352"/>
    </location>
</feature>
<feature type="domain" description="TRUD" evidence="1">
    <location>
        <begin position="157"/>
        <end position="303"/>
    </location>
</feature>
<feature type="active site" description="Nucleophile" evidence="1">
    <location>
        <position position="81"/>
    </location>
</feature>
<evidence type="ECO:0000255" key="1">
    <source>
        <dbReference type="HAMAP-Rule" id="MF_01082"/>
    </source>
</evidence>
<name>TRUD_PSEE4</name>